<feature type="chain" id="PRO_0000181305" description="Acid-sensing ion channel 4">
    <location>
        <begin position="1"/>
        <end position="539"/>
    </location>
</feature>
<feature type="topological domain" description="Cytoplasmic" evidence="6">
    <location>
        <begin position="1"/>
        <end position="68"/>
    </location>
</feature>
<feature type="transmembrane region" description="Helical" evidence="4">
    <location>
        <begin position="69"/>
        <end position="89"/>
    </location>
</feature>
<feature type="topological domain" description="Extracellular" evidence="6">
    <location>
        <begin position="90"/>
        <end position="438"/>
    </location>
</feature>
<feature type="transmembrane region" description="Helical" evidence="4">
    <location>
        <begin position="439"/>
        <end position="459"/>
    </location>
</feature>
<feature type="topological domain" description="Cytoplasmic" evidence="6">
    <location>
        <begin position="460"/>
        <end position="539"/>
    </location>
</feature>
<feature type="region of interest" description="Disordered" evidence="5">
    <location>
        <begin position="500"/>
        <end position="531"/>
    </location>
</feature>
<feature type="short sequence motif" description="GAS motif; ion selectivity filter" evidence="1">
    <location>
        <begin position="452"/>
        <end position="454"/>
    </location>
</feature>
<feature type="glycosylation site" description="N-linked (GlcNAc...) asparagine" evidence="4">
    <location>
        <position position="191"/>
    </location>
</feature>
<feature type="glycosylation site" description="N-linked (GlcNAc...) asparagine" evidence="4">
    <location>
        <position position="243"/>
    </location>
</feature>
<feature type="glycosylation site" description="N-linked (GlcNAc...) asparagine" evidence="4">
    <location>
        <position position="341"/>
    </location>
</feature>
<feature type="glycosylation site" description="N-linked (GlcNAc...) asparagine" evidence="4">
    <location>
        <position position="376"/>
    </location>
</feature>
<feature type="disulfide bond" evidence="1">
    <location>
        <begin position="118"/>
        <end position="202"/>
    </location>
</feature>
<feature type="disulfide bond" evidence="1">
    <location>
        <begin position="180"/>
        <end position="187"/>
    </location>
</feature>
<feature type="disulfide bond" evidence="1">
    <location>
        <begin position="296"/>
        <end position="375"/>
    </location>
</feature>
<feature type="disulfide bond" evidence="1">
    <location>
        <begin position="318"/>
        <end position="371"/>
    </location>
</feature>
<feature type="disulfide bond" evidence="1">
    <location>
        <begin position="322"/>
        <end position="369"/>
    </location>
</feature>
<feature type="disulfide bond" evidence="1">
    <location>
        <begin position="331"/>
        <end position="353"/>
    </location>
</feature>
<feature type="disulfide bond" evidence="1">
    <location>
        <begin position="333"/>
        <end position="345"/>
    </location>
</feature>
<accession>Q7TNS7</accession>
<accession>Q80XK4</accession>
<dbReference type="EMBL" id="BC046481">
    <property type="protein sequence ID" value="AAH46481.1"/>
    <property type="molecule type" value="mRNA"/>
</dbReference>
<dbReference type="EMBL" id="BC055772">
    <property type="protein sequence ID" value="AAH55772.1"/>
    <property type="molecule type" value="mRNA"/>
</dbReference>
<dbReference type="CCDS" id="CCDS15073.1"/>
<dbReference type="RefSeq" id="NP_898843.1">
    <property type="nucleotide sequence ID" value="NM_183022.3"/>
</dbReference>
<dbReference type="SMR" id="Q7TNS7"/>
<dbReference type="BioGRID" id="232281">
    <property type="interactions" value="1"/>
</dbReference>
<dbReference type="FunCoup" id="Q7TNS7">
    <property type="interactions" value="29"/>
</dbReference>
<dbReference type="STRING" id="10090.ENSMUSP00000045598"/>
<dbReference type="GlyConnect" id="2102">
    <property type="glycosylation" value="3 N-Linked glycans (2 sites)"/>
</dbReference>
<dbReference type="GlyCosmos" id="Q7TNS7">
    <property type="glycosylation" value="5 sites, 3 glycans"/>
</dbReference>
<dbReference type="GlyGen" id="Q7TNS7">
    <property type="glycosylation" value="9 sites, 8 N-linked glycans (7 sites)"/>
</dbReference>
<dbReference type="iPTMnet" id="Q7TNS7"/>
<dbReference type="PhosphoSitePlus" id="Q7TNS7"/>
<dbReference type="PaxDb" id="10090-ENSMUSP00000045598"/>
<dbReference type="ProteomicsDB" id="281847"/>
<dbReference type="Antibodypedia" id="20142">
    <property type="antibodies" value="141 antibodies from 24 providers"/>
</dbReference>
<dbReference type="DNASU" id="241118"/>
<dbReference type="Ensembl" id="ENSMUST00000037708.10">
    <property type="protein sequence ID" value="ENSMUSP00000045598.10"/>
    <property type="gene ID" value="ENSMUSG00000033007.16"/>
</dbReference>
<dbReference type="GeneID" id="241118"/>
<dbReference type="KEGG" id="mmu:241118"/>
<dbReference type="UCSC" id="uc007bpg.1">
    <property type="organism name" value="mouse"/>
</dbReference>
<dbReference type="AGR" id="MGI:2652846"/>
<dbReference type="CTD" id="55515"/>
<dbReference type="MGI" id="MGI:2652846">
    <property type="gene designation" value="Asic4"/>
</dbReference>
<dbReference type="VEuPathDB" id="HostDB:ENSMUSG00000033007"/>
<dbReference type="eggNOG" id="KOG4294">
    <property type="taxonomic scope" value="Eukaryota"/>
</dbReference>
<dbReference type="GeneTree" id="ENSGT00940000159052"/>
<dbReference type="InParanoid" id="Q7TNS7"/>
<dbReference type="OMA" id="FNFLHPY"/>
<dbReference type="OrthoDB" id="6502088at2759"/>
<dbReference type="PhylomeDB" id="Q7TNS7"/>
<dbReference type="TreeFam" id="TF330663"/>
<dbReference type="Reactome" id="R-MMU-2672351">
    <property type="pathway name" value="Stimuli-sensing channels"/>
</dbReference>
<dbReference type="BioGRID-ORCS" id="241118">
    <property type="hits" value="0 hits in 78 CRISPR screens"/>
</dbReference>
<dbReference type="PRO" id="PR:Q7TNS7"/>
<dbReference type="Proteomes" id="UP000000589">
    <property type="component" value="Chromosome 1"/>
</dbReference>
<dbReference type="RNAct" id="Q7TNS7">
    <property type="molecule type" value="protein"/>
</dbReference>
<dbReference type="Bgee" id="ENSMUSG00000033007">
    <property type="expression patterns" value="Expressed in roof plate of diencephalon and 93 other cell types or tissues"/>
</dbReference>
<dbReference type="ExpressionAtlas" id="Q7TNS7">
    <property type="expression patterns" value="baseline and differential"/>
</dbReference>
<dbReference type="GO" id="GO:0005886">
    <property type="term" value="C:plasma membrane"/>
    <property type="evidence" value="ECO:0007669"/>
    <property type="project" value="UniProtKB-SubCell"/>
</dbReference>
<dbReference type="GO" id="GO:0005272">
    <property type="term" value="F:sodium channel activity"/>
    <property type="evidence" value="ECO:0007669"/>
    <property type="project" value="UniProtKB-KW"/>
</dbReference>
<dbReference type="GO" id="GO:0001662">
    <property type="term" value="P:behavioral fear response"/>
    <property type="evidence" value="ECO:0000315"/>
    <property type="project" value="MGI"/>
</dbReference>
<dbReference type="FunFam" id="2.60.470.10:FF:000001">
    <property type="entry name" value="Acid-sensing (proton-gated) ion channel family member 4a"/>
    <property type="match status" value="1"/>
</dbReference>
<dbReference type="FunFam" id="1.10.287.770:FF:000001">
    <property type="entry name" value="Acid-sensing ion channel subunit 1"/>
    <property type="match status" value="1"/>
</dbReference>
<dbReference type="Gene3D" id="2.60.470.10">
    <property type="entry name" value="Acid-sensing ion channels like domains"/>
    <property type="match status" value="1"/>
</dbReference>
<dbReference type="Gene3D" id="1.10.287.770">
    <property type="entry name" value="YojJ-like"/>
    <property type="match status" value="1"/>
</dbReference>
<dbReference type="InterPro" id="IPR001873">
    <property type="entry name" value="ENaC"/>
</dbReference>
<dbReference type="InterPro" id="IPR020903">
    <property type="entry name" value="ENaC_CS"/>
</dbReference>
<dbReference type="PANTHER" id="PTHR11690:SF13">
    <property type="entry name" value="ACID-SENSING ION CHANNEL 4"/>
    <property type="match status" value="1"/>
</dbReference>
<dbReference type="PANTHER" id="PTHR11690">
    <property type="entry name" value="AMILORIDE-SENSITIVE SODIUM CHANNEL-RELATED"/>
    <property type="match status" value="1"/>
</dbReference>
<dbReference type="Pfam" id="PF00858">
    <property type="entry name" value="ASC"/>
    <property type="match status" value="1"/>
</dbReference>
<dbReference type="PRINTS" id="PR01078">
    <property type="entry name" value="AMINACHANNEL"/>
</dbReference>
<dbReference type="PROSITE" id="PS01206">
    <property type="entry name" value="ASC"/>
    <property type="match status" value="1"/>
</dbReference>
<name>ASIC4_MOUSE</name>
<gene>
    <name evidence="7" type="primary">Asic4</name>
    <name evidence="7" type="synonym">Accn4</name>
</gene>
<sequence>MPIEIVCKIKFAEEDAKPKEKEAGDEQSLLGAAQGPAAPRDLATFASTSTLHGLGRACGPGPHGLRRTLWALALLTSLAAFLYQAASLARGYLTRPHLVAMDPAAPAPVAGFPAVTLCNINRFRHSALSDADIFHLANLTGLPPKDRDGHRAAGLRYPEPDMVDILNRTGHQLADMLKSCNFSGHHCSASNFSVVYTRYGKCYTFNADPQSSLPSRAGGMGSGLEIMLDIQQEEYLPIWRETNETSFEAGIRVQIHSQEEPPYIHQLGFGVSPGFQTFVSCQEQRLTYLPQPWGNCRAESELREPELQGYSAYSVSACRLRCEKEAVLQRCHCRMVHMPGNETICPPNIYIECADHTLDSLGGGSEGPCFCPTPCNLTRYGKEISMVKIPNRGSARYLARKYNRNETYIRENFLVLDVFFEALTSEAMEQQAAYGLSALLGDLGGQMGLFIGASILTLLEILDYIYEVSWDRLKRVWRRPKTPLRTSTGGISTLGLQELKEQSPCPSRGRAEGGGASSLLPNHHHPHGPPGSLFEDFAC</sequence>
<protein>
    <recommendedName>
        <fullName evidence="6">Acid-sensing ion channel 4</fullName>
        <shortName>ASIC4</shortName>
    </recommendedName>
    <alternativeName>
        <fullName>Amiloride-sensitive cation channel 4</fullName>
    </alternativeName>
</protein>
<organism>
    <name type="scientific">Mus musculus</name>
    <name type="common">Mouse</name>
    <dbReference type="NCBI Taxonomy" id="10090"/>
    <lineage>
        <taxon>Eukaryota</taxon>
        <taxon>Metazoa</taxon>
        <taxon>Chordata</taxon>
        <taxon>Craniata</taxon>
        <taxon>Vertebrata</taxon>
        <taxon>Euteleostomi</taxon>
        <taxon>Mammalia</taxon>
        <taxon>Eutheria</taxon>
        <taxon>Euarchontoglires</taxon>
        <taxon>Glires</taxon>
        <taxon>Rodentia</taxon>
        <taxon>Myomorpha</taxon>
        <taxon>Muroidea</taxon>
        <taxon>Muridae</taxon>
        <taxon>Murinae</taxon>
        <taxon>Mus</taxon>
        <taxon>Mus</taxon>
    </lineage>
</organism>
<evidence type="ECO:0000250" key="1">
    <source>
        <dbReference type="UniProtKB" id="P78348"/>
    </source>
</evidence>
<evidence type="ECO:0000250" key="2">
    <source>
        <dbReference type="UniProtKB" id="Q708S4"/>
    </source>
</evidence>
<evidence type="ECO:0000250" key="3">
    <source>
        <dbReference type="UniProtKB" id="Q9JHS6"/>
    </source>
</evidence>
<evidence type="ECO:0000255" key="4"/>
<evidence type="ECO:0000256" key="5">
    <source>
        <dbReference type="SAM" id="MobiDB-lite"/>
    </source>
</evidence>
<evidence type="ECO:0000305" key="6"/>
<evidence type="ECO:0000312" key="7">
    <source>
        <dbReference type="MGI" id="MGI:2652846"/>
    </source>
</evidence>
<keyword id="KW-1003">Cell membrane</keyword>
<keyword id="KW-1015">Disulfide bond</keyword>
<keyword id="KW-0325">Glycoprotein</keyword>
<keyword id="KW-0407">Ion channel</keyword>
<keyword id="KW-0406">Ion transport</keyword>
<keyword id="KW-0472">Membrane</keyword>
<keyword id="KW-1185">Reference proteome</keyword>
<keyword id="KW-0915">Sodium</keyword>
<keyword id="KW-0894">Sodium channel</keyword>
<keyword id="KW-0739">Sodium transport</keyword>
<keyword id="KW-0812">Transmembrane</keyword>
<keyword id="KW-1133">Transmembrane helix</keyword>
<keyword id="KW-0813">Transport</keyword>
<comment type="function">
    <text evidence="3">Does not exhibit measurable stand-alone pH-gated sodium channel activity but may form pH-gated heterotrimeric sodium channels. Its activity could also depend on alternative gating mechanisms.</text>
</comment>
<comment type="subunit">
    <text evidence="2">Homotrimer. Heterotrimer; with other ASIC proteins producing functional channels.</text>
</comment>
<comment type="subcellular location">
    <subcellularLocation>
        <location evidence="1">Cell membrane</location>
        <topology evidence="4">Multi-pass membrane protein</topology>
    </subcellularLocation>
</comment>
<comment type="similarity">
    <text evidence="6">Belongs to the amiloride-sensitive sodium channel (TC 1.A.6) family. ASIC4 subfamily.</text>
</comment>
<proteinExistence type="evidence at transcript level"/>
<reference key="1">
    <citation type="journal article" date="2004" name="Genome Res.">
        <title>The status, quality, and expansion of the NIH full-length cDNA project: the Mammalian Gene Collection (MGC).</title>
        <authorList>
            <consortium name="The MGC Project Team"/>
        </authorList>
    </citation>
    <scope>NUCLEOTIDE SEQUENCE [LARGE SCALE MRNA]</scope>
    <source>
        <strain>C57BL/6J</strain>
        <tissue>Brain</tissue>
        <tissue>Eye</tissue>
    </source>
</reference>